<protein>
    <recommendedName>
        <fullName>Uncharacterized protein MG384.1 homolog</fullName>
    </recommendedName>
</protein>
<reference key="1">
    <citation type="journal article" date="1996" name="Nucleic Acids Res.">
        <title>Complete sequence analysis of the genome of the bacterium Mycoplasma pneumoniae.</title>
        <authorList>
            <person name="Himmelreich R."/>
            <person name="Hilbert H."/>
            <person name="Plagens H."/>
            <person name="Pirkl E."/>
            <person name="Li B.-C."/>
            <person name="Herrmann R."/>
        </authorList>
    </citation>
    <scope>NUCLEOTIDE SEQUENCE [LARGE SCALE GENOMIC DNA]</scope>
    <source>
        <strain>ATCC 29342 / M129 / Subtype 1</strain>
    </source>
</reference>
<evidence type="ECO:0000255" key="1"/>
<evidence type="ECO:0000305" key="2"/>
<organism>
    <name type="scientific">Mycoplasma pneumoniae (strain ATCC 29342 / M129 / Subtype 1)</name>
    <name type="common">Mycoplasmoides pneumoniae</name>
    <dbReference type="NCBI Taxonomy" id="272634"/>
    <lineage>
        <taxon>Bacteria</taxon>
        <taxon>Bacillati</taxon>
        <taxon>Mycoplasmatota</taxon>
        <taxon>Mycoplasmoidales</taxon>
        <taxon>Mycoplasmoidaceae</taxon>
        <taxon>Mycoplasmoides</taxon>
    </lineage>
</organism>
<proteinExistence type="predicted"/>
<gene>
    <name type="ordered locus">MPN_565</name>
    <name type="ORF">H03_orf152</name>
    <name type="ORF">MP277</name>
</gene>
<comment type="subcellular location">
    <subcellularLocation>
        <location evidence="2">Cell membrane</location>
        <topology evidence="2">Multi-pass membrane protein</topology>
    </subcellularLocation>
</comment>
<keyword id="KW-1003">Cell membrane</keyword>
<keyword id="KW-0472">Membrane</keyword>
<keyword id="KW-1185">Reference proteome</keyword>
<keyword id="KW-0812">Transmembrane</keyword>
<keyword id="KW-1133">Transmembrane helix</keyword>
<name>Y565_MYCPN</name>
<accession>P75213</accession>
<sequence length="152" mass="17463">MGREVEPIFDLVLLWFLLVPLVVYALLLLLLFFTTPYLIVEAIPFCYGIALMMISLFMSGMFPQAWNVWVIFGRFVLVLVVLMLSFFVINKLTNLVLLRSRYAMVVAQGLVHTGKVKQQSQQAMSDIKTKWDKEKSKTVVVTIKKKRVKSSD</sequence>
<feature type="chain" id="PRO_0000210585" description="Uncharacterized protein MG384.1 homolog">
    <location>
        <begin position="1"/>
        <end position="152"/>
    </location>
</feature>
<feature type="transmembrane region" description="Helical" evidence="1">
    <location>
        <begin position="13"/>
        <end position="33"/>
    </location>
</feature>
<feature type="transmembrane region" description="Helical" evidence="1">
    <location>
        <begin position="38"/>
        <end position="58"/>
    </location>
</feature>
<feature type="transmembrane region" description="Helical" evidence="1">
    <location>
        <begin position="69"/>
        <end position="89"/>
    </location>
</feature>
<dbReference type="EMBL" id="U00089">
    <property type="protein sequence ID" value="AAB95925.1"/>
    <property type="molecule type" value="Genomic_DNA"/>
</dbReference>
<dbReference type="PIR" id="S73603">
    <property type="entry name" value="S73603"/>
</dbReference>
<dbReference type="STRING" id="272634.MPN_565"/>
<dbReference type="EnsemblBacteria" id="AAB95925">
    <property type="protein sequence ID" value="AAB95925"/>
    <property type="gene ID" value="MPN_565"/>
</dbReference>
<dbReference type="KEGG" id="mpn:MPN_565"/>
<dbReference type="HOGENOM" id="CLU_115817_0_0_14"/>
<dbReference type="Proteomes" id="UP000000808">
    <property type="component" value="Chromosome"/>
</dbReference>
<dbReference type="GO" id="GO:0005886">
    <property type="term" value="C:plasma membrane"/>
    <property type="evidence" value="ECO:0007669"/>
    <property type="project" value="UniProtKB-SubCell"/>
</dbReference>
<dbReference type="NCBIfam" id="NF045757">
    <property type="entry name" value="MPN565"/>
    <property type="match status" value="1"/>
</dbReference>